<feature type="chain" id="PRO_1000016027" description="Aspartyl/glutamyl-tRNA(Asn/Gln) amidotransferase subunit B">
    <location>
        <begin position="1"/>
        <end position="484"/>
    </location>
</feature>
<evidence type="ECO:0000255" key="1">
    <source>
        <dbReference type="HAMAP-Rule" id="MF_00121"/>
    </source>
</evidence>
<accession>Q1LSE4</accession>
<organism>
    <name type="scientific">Cupriavidus metallidurans (strain ATCC 43123 / DSM 2839 / NBRC 102507 / CH34)</name>
    <name type="common">Ralstonia metallidurans</name>
    <dbReference type="NCBI Taxonomy" id="266264"/>
    <lineage>
        <taxon>Bacteria</taxon>
        <taxon>Pseudomonadati</taxon>
        <taxon>Pseudomonadota</taxon>
        <taxon>Betaproteobacteria</taxon>
        <taxon>Burkholderiales</taxon>
        <taxon>Burkholderiaceae</taxon>
        <taxon>Cupriavidus</taxon>
    </lineage>
</organism>
<comment type="function">
    <text evidence="1">Allows the formation of correctly charged Asn-tRNA(Asn) or Gln-tRNA(Gln) through the transamidation of misacylated Asp-tRNA(Asn) or Glu-tRNA(Gln) in organisms which lack either or both of asparaginyl-tRNA or glutaminyl-tRNA synthetases. The reaction takes place in the presence of glutamine and ATP through an activated phospho-Asp-tRNA(Asn) or phospho-Glu-tRNA(Gln).</text>
</comment>
<comment type="catalytic activity">
    <reaction evidence="1">
        <text>L-glutamyl-tRNA(Gln) + L-glutamine + ATP + H2O = L-glutaminyl-tRNA(Gln) + L-glutamate + ADP + phosphate + H(+)</text>
        <dbReference type="Rhea" id="RHEA:17521"/>
        <dbReference type="Rhea" id="RHEA-COMP:9681"/>
        <dbReference type="Rhea" id="RHEA-COMP:9684"/>
        <dbReference type="ChEBI" id="CHEBI:15377"/>
        <dbReference type="ChEBI" id="CHEBI:15378"/>
        <dbReference type="ChEBI" id="CHEBI:29985"/>
        <dbReference type="ChEBI" id="CHEBI:30616"/>
        <dbReference type="ChEBI" id="CHEBI:43474"/>
        <dbReference type="ChEBI" id="CHEBI:58359"/>
        <dbReference type="ChEBI" id="CHEBI:78520"/>
        <dbReference type="ChEBI" id="CHEBI:78521"/>
        <dbReference type="ChEBI" id="CHEBI:456216"/>
    </reaction>
</comment>
<comment type="catalytic activity">
    <reaction evidence="1">
        <text>L-aspartyl-tRNA(Asn) + L-glutamine + ATP + H2O = L-asparaginyl-tRNA(Asn) + L-glutamate + ADP + phosphate + 2 H(+)</text>
        <dbReference type="Rhea" id="RHEA:14513"/>
        <dbReference type="Rhea" id="RHEA-COMP:9674"/>
        <dbReference type="Rhea" id="RHEA-COMP:9677"/>
        <dbReference type="ChEBI" id="CHEBI:15377"/>
        <dbReference type="ChEBI" id="CHEBI:15378"/>
        <dbReference type="ChEBI" id="CHEBI:29985"/>
        <dbReference type="ChEBI" id="CHEBI:30616"/>
        <dbReference type="ChEBI" id="CHEBI:43474"/>
        <dbReference type="ChEBI" id="CHEBI:58359"/>
        <dbReference type="ChEBI" id="CHEBI:78515"/>
        <dbReference type="ChEBI" id="CHEBI:78516"/>
        <dbReference type="ChEBI" id="CHEBI:456216"/>
    </reaction>
</comment>
<comment type="subunit">
    <text evidence="1">Heterotrimer of A, B and C subunits.</text>
</comment>
<comment type="similarity">
    <text evidence="1">Belongs to the GatB/GatE family. GatB subfamily.</text>
</comment>
<name>GATB_CUPMC</name>
<sequence length="484" mass="52574">MQWEVVIGLETHTQLSTASKIFSGTSTAFGAEPNTQASPVDLALPGVLPVLNRGAVERAIQFGLSIGATIAPRSIFARKNYFYPDLPKGYQISQYEIPVVQGGQITIQVEGKQGVYEKTVNLTRAHLEEDAGKSLHEDFAGMTGIDLNRAGTPLLEIVTEPDMRSSAEAVAYAKALHSLVVWLGICDGNMQEGSFRCDANVSVRPVGQEKFGTRREIKNLNSFRFLQQAIDYEVQWQIAEIEDGREIVQATVLFDPDTGETRAMRTKEDAHDYRYFPDPDLMPLEIDAAWVERVKSELPELPATMQARFVSQYGLSAYDASTITATKALAAYYEAVVTNVGAASAKPAANWVMGEIASQLNREGISIDEAPVRPAQLAKLLARITDGTVSNNTAKKDVFPAMWAGESDGDADAIIAAKGLKQMSDTGELEKIIDDVLAANAKSVEEFRAGKEKAFNALVGQAMKATKGKANPAQVNELLKKKLG</sequence>
<reference key="1">
    <citation type="journal article" date="2010" name="PLoS ONE">
        <title>The complete genome sequence of Cupriavidus metallidurans strain CH34, a master survivalist in harsh and anthropogenic environments.</title>
        <authorList>
            <person name="Janssen P.J."/>
            <person name="Van Houdt R."/>
            <person name="Moors H."/>
            <person name="Monsieurs P."/>
            <person name="Morin N."/>
            <person name="Michaux A."/>
            <person name="Benotmane M.A."/>
            <person name="Leys N."/>
            <person name="Vallaeys T."/>
            <person name="Lapidus A."/>
            <person name="Monchy S."/>
            <person name="Medigue C."/>
            <person name="Taghavi S."/>
            <person name="McCorkle S."/>
            <person name="Dunn J."/>
            <person name="van der Lelie D."/>
            <person name="Mergeay M."/>
        </authorList>
    </citation>
    <scope>NUCLEOTIDE SEQUENCE [LARGE SCALE GENOMIC DNA]</scope>
    <source>
        <strain>ATCC 43123 / DSM 2839 / NBRC 102507 / CH34</strain>
    </source>
</reference>
<gene>
    <name evidence="1" type="primary">gatB</name>
    <name type="ordered locus">Rmet_0046</name>
</gene>
<dbReference type="EC" id="6.3.5.-" evidence="1"/>
<dbReference type="EMBL" id="CP000352">
    <property type="protein sequence ID" value="ABF06932.1"/>
    <property type="molecule type" value="Genomic_DNA"/>
</dbReference>
<dbReference type="SMR" id="Q1LSE4"/>
<dbReference type="STRING" id="266264.Rmet_0046"/>
<dbReference type="KEGG" id="rme:Rmet_0046"/>
<dbReference type="eggNOG" id="COG0064">
    <property type="taxonomic scope" value="Bacteria"/>
</dbReference>
<dbReference type="HOGENOM" id="CLU_019240_0_0_4"/>
<dbReference type="Proteomes" id="UP000002429">
    <property type="component" value="Chromosome"/>
</dbReference>
<dbReference type="GO" id="GO:0050566">
    <property type="term" value="F:asparaginyl-tRNA synthase (glutamine-hydrolyzing) activity"/>
    <property type="evidence" value="ECO:0007669"/>
    <property type="project" value="RHEA"/>
</dbReference>
<dbReference type="GO" id="GO:0005524">
    <property type="term" value="F:ATP binding"/>
    <property type="evidence" value="ECO:0007669"/>
    <property type="project" value="UniProtKB-KW"/>
</dbReference>
<dbReference type="GO" id="GO:0050567">
    <property type="term" value="F:glutaminyl-tRNA synthase (glutamine-hydrolyzing) activity"/>
    <property type="evidence" value="ECO:0007669"/>
    <property type="project" value="UniProtKB-UniRule"/>
</dbReference>
<dbReference type="GO" id="GO:0070681">
    <property type="term" value="P:glutaminyl-tRNAGln biosynthesis via transamidation"/>
    <property type="evidence" value="ECO:0007669"/>
    <property type="project" value="TreeGrafter"/>
</dbReference>
<dbReference type="GO" id="GO:0006412">
    <property type="term" value="P:translation"/>
    <property type="evidence" value="ECO:0007669"/>
    <property type="project" value="UniProtKB-UniRule"/>
</dbReference>
<dbReference type="FunFam" id="1.10.10.410:FF:000001">
    <property type="entry name" value="Aspartyl/glutamyl-tRNA(Asn/Gln) amidotransferase subunit B"/>
    <property type="match status" value="1"/>
</dbReference>
<dbReference type="FunFam" id="1.10.150.380:FF:000001">
    <property type="entry name" value="Aspartyl/glutamyl-tRNA(Asn/Gln) amidotransferase subunit B"/>
    <property type="match status" value="1"/>
</dbReference>
<dbReference type="Gene3D" id="1.10.10.410">
    <property type="match status" value="1"/>
</dbReference>
<dbReference type="Gene3D" id="1.10.150.380">
    <property type="entry name" value="GatB domain, N-terminal subdomain"/>
    <property type="match status" value="1"/>
</dbReference>
<dbReference type="HAMAP" id="MF_00121">
    <property type="entry name" value="GatB"/>
    <property type="match status" value="1"/>
</dbReference>
<dbReference type="InterPro" id="IPR017959">
    <property type="entry name" value="Asn/Gln-tRNA_amidoTrfase_suB/E"/>
</dbReference>
<dbReference type="InterPro" id="IPR006075">
    <property type="entry name" value="Asn/Gln-tRNA_Trfase_suB/E_cat"/>
</dbReference>
<dbReference type="InterPro" id="IPR018027">
    <property type="entry name" value="Asn/Gln_amidotransferase"/>
</dbReference>
<dbReference type="InterPro" id="IPR003789">
    <property type="entry name" value="Asn/Gln_tRNA_amidoTrase-B-like"/>
</dbReference>
<dbReference type="InterPro" id="IPR004413">
    <property type="entry name" value="GatB"/>
</dbReference>
<dbReference type="InterPro" id="IPR042114">
    <property type="entry name" value="GatB_C_1"/>
</dbReference>
<dbReference type="InterPro" id="IPR023168">
    <property type="entry name" value="GatB_Yqey_C_2"/>
</dbReference>
<dbReference type="InterPro" id="IPR017958">
    <property type="entry name" value="Gln-tRNA_amidoTrfase_suB_CS"/>
</dbReference>
<dbReference type="InterPro" id="IPR014746">
    <property type="entry name" value="Gln_synth/guanido_kin_cat_dom"/>
</dbReference>
<dbReference type="NCBIfam" id="TIGR00133">
    <property type="entry name" value="gatB"/>
    <property type="match status" value="1"/>
</dbReference>
<dbReference type="NCBIfam" id="NF004012">
    <property type="entry name" value="PRK05477.1-2"/>
    <property type="match status" value="1"/>
</dbReference>
<dbReference type="NCBIfam" id="NF004014">
    <property type="entry name" value="PRK05477.1-4"/>
    <property type="match status" value="1"/>
</dbReference>
<dbReference type="NCBIfam" id="NF004015">
    <property type="entry name" value="PRK05477.1-5"/>
    <property type="match status" value="1"/>
</dbReference>
<dbReference type="PANTHER" id="PTHR11659">
    <property type="entry name" value="GLUTAMYL-TRNA GLN AMIDOTRANSFERASE SUBUNIT B MITOCHONDRIAL AND PROKARYOTIC PET112-RELATED"/>
    <property type="match status" value="1"/>
</dbReference>
<dbReference type="PANTHER" id="PTHR11659:SF0">
    <property type="entry name" value="GLUTAMYL-TRNA(GLN) AMIDOTRANSFERASE SUBUNIT B, MITOCHONDRIAL"/>
    <property type="match status" value="1"/>
</dbReference>
<dbReference type="Pfam" id="PF02934">
    <property type="entry name" value="GatB_N"/>
    <property type="match status" value="1"/>
</dbReference>
<dbReference type="Pfam" id="PF02637">
    <property type="entry name" value="GatB_Yqey"/>
    <property type="match status" value="1"/>
</dbReference>
<dbReference type="SMART" id="SM00845">
    <property type="entry name" value="GatB_Yqey"/>
    <property type="match status" value="1"/>
</dbReference>
<dbReference type="SUPFAM" id="SSF89095">
    <property type="entry name" value="GatB/YqeY motif"/>
    <property type="match status" value="1"/>
</dbReference>
<dbReference type="SUPFAM" id="SSF55931">
    <property type="entry name" value="Glutamine synthetase/guanido kinase"/>
    <property type="match status" value="1"/>
</dbReference>
<dbReference type="PROSITE" id="PS01234">
    <property type="entry name" value="GATB"/>
    <property type="match status" value="1"/>
</dbReference>
<keyword id="KW-0067">ATP-binding</keyword>
<keyword id="KW-0436">Ligase</keyword>
<keyword id="KW-0547">Nucleotide-binding</keyword>
<keyword id="KW-0648">Protein biosynthesis</keyword>
<keyword id="KW-1185">Reference proteome</keyword>
<protein>
    <recommendedName>
        <fullName evidence="1">Aspartyl/glutamyl-tRNA(Asn/Gln) amidotransferase subunit B</fullName>
        <shortName evidence="1">Asp/Glu-ADT subunit B</shortName>
        <ecNumber evidence="1">6.3.5.-</ecNumber>
    </recommendedName>
</protein>
<proteinExistence type="inferred from homology"/>